<organism>
    <name type="scientific">Escherichia coli O1:K1 / APEC</name>
    <dbReference type="NCBI Taxonomy" id="405955"/>
    <lineage>
        <taxon>Bacteria</taxon>
        <taxon>Pseudomonadati</taxon>
        <taxon>Pseudomonadota</taxon>
        <taxon>Gammaproteobacteria</taxon>
        <taxon>Enterobacterales</taxon>
        <taxon>Enterobacteriaceae</taxon>
        <taxon>Escherichia</taxon>
    </lineage>
</organism>
<proteinExistence type="inferred from homology"/>
<sequence length="518" mass="58288">MKKLKINYLFIGILALLLAVALWPSIPWFGKADNRIAAIQARGELRVSTIHTPLTYNEINGKPFGLDYELAKQFADYLGVKLKVTVRQNISQLFDDLDNGNADLLAAGLVYNSERVKNYQPGPTYYSVSQQLVYKVGQYRPRTLGNLTAEQLTVAPGHVVVNDLQTLKDTKFPELSWKVDDKKGSAELMEDVIEGKLDYTIADSVAISLFQRVHPELAVALDITDEQPVTWFSPLDGDNTLSAALLDFFNEMNEDGTLARIEEKYLGHGDDFDYVDTRTFLRAVDAVLPQLKPLFEKYAEEIDWRLLAAIAYQESHWDAQATSPTGVRGMMMLTKNTAQSLGITDRTDAEQSISGGVRYLQDMMSKVPESVPENERIWFALAAYNMGYAHMLDARALTAKTKGNPDSWADVKQRLPLLSQKPYYSKLTYGYARGHEAYAYVENIRKYQISLVGYLQEKEKQATEAAMQLAQDYPAVSPTELGKEKFPFLSFLSQSSSNYLTHSPSLLFSRKGSEEKQN</sequence>
<gene>
    <name evidence="1" type="primary">mltF</name>
    <name type="ordered locus">Ecok1_24850</name>
    <name type="ORF">APECO1_3973</name>
</gene>
<protein>
    <recommendedName>
        <fullName evidence="1">Membrane-bound lytic murein transglycosylase F</fullName>
        <ecNumber evidence="1">4.2.2.n1</ecNumber>
    </recommendedName>
    <alternativeName>
        <fullName evidence="1">Murein lyase F</fullName>
    </alternativeName>
</protein>
<comment type="function">
    <text evidence="1">Murein-degrading enzyme that degrades murein glycan strands and insoluble, high-molecular weight murein sacculi, with the concomitant formation of a 1,6-anhydromuramoyl product. Lytic transglycosylases (LTs) play an integral role in the metabolism of the peptidoglycan (PG) sacculus. Their lytic action creates space within the PG sacculus to allow for its expansion as well as for the insertion of various structures such as secretion systems and flagella.</text>
</comment>
<comment type="catalytic activity">
    <reaction evidence="1">
        <text>Exolytic cleavage of the (1-&gt;4)-beta-glycosidic linkage between N-acetylmuramic acid (MurNAc) and N-acetylglucosamine (GlcNAc) residues in peptidoglycan, from either the reducing or the non-reducing ends of the peptidoglycan chains, with concomitant formation of a 1,6-anhydrobond in the MurNAc residue.</text>
        <dbReference type="EC" id="4.2.2.n1"/>
    </reaction>
</comment>
<comment type="subcellular location">
    <subcellularLocation>
        <location>Cell outer membrane</location>
        <topology>Peripheral membrane protein</topology>
    </subcellularLocation>
    <text evidence="1">Attached to the inner leaflet of the outer membrane.</text>
</comment>
<comment type="domain">
    <text evidence="1">The N-terminal domain does not have lytic activity and probably modulates enzymatic activity. The C-terminal domain is the catalytic active domain.</text>
</comment>
<comment type="similarity">
    <text evidence="1">In the N-terminal section; belongs to the bacterial solute-binding protein 3 family.</text>
</comment>
<comment type="similarity">
    <text evidence="1">In the C-terminal section; belongs to the transglycosylase Slt family.</text>
</comment>
<comment type="sequence caution" evidence="2">
    <conflict type="erroneous initiation">
        <sequence resource="EMBL-CDS" id="ABJ01979"/>
    </conflict>
</comment>
<feature type="signal peptide" evidence="1">
    <location>
        <begin position="1"/>
        <end position="21"/>
    </location>
</feature>
<feature type="chain" id="PRO_0000353931" description="Membrane-bound lytic murein transglycosylase F">
    <location>
        <begin position="22"/>
        <end position="518"/>
    </location>
</feature>
<feature type="region of interest" description="Non-LT domain" evidence="1">
    <location>
        <begin position="22"/>
        <end position="269"/>
    </location>
</feature>
<feature type="region of interest" description="LT domain" evidence="1">
    <location>
        <begin position="270"/>
        <end position="518"/>
    </location>
</feature>
<feature type="active site" evidence="1">
    <location>
        <position position="314"/>
    </location>
</feature>
<keyword id="KW-0998">Cell outer membrane</keyword>
<keyword id="KW-0961">Cell wall biogenesis/degradation</keyword>
<keyword id="KW-0456">Lyase</keyword>
<keyword id="KW-0472">Membrane</keyword>
<keyword id="KW-1185">Reference proteome</keyword>
<keyword id="KW-0732">Signal</keyword>
<reference key="1">
    <citation type="journal article" date="2007" name="J. Bacteriol.">
        <title>The genome sequence of avian pathogenic Escherichia coli strain O1:K1:H7 shares strong similarities with human extraintestinal pathogenic E. coli genomes.</title>
        <authorList>
            <person name="Johnson T.J."/>
            <person name="Kariyawasam S."/>
            <person name="Wannemuehler Y."/>
            <person name="Mangiamele P."/>
            <person name="Johnson S.J."/>
            <person name="Doetkott C."/>
            <person name="Skyberg J.A."/>
            <person name="Lynne A.M."/>
            <person name="Johnson J.R."/>
            <person name="Nolan L.K."/>
        </authorList>
    </citation>
    <scope>NUCLEOTIDE SEQUENCE [LARGE SCALE GENOMIC DNA]</scope>
</reference>
<accession>A1AE89</accession>
<evidence type="ECO:0000255" key="1">
    <source>
        <dbReference type="HAMAP-Rule" id="MF_02016"/>
    </source>
</evidence>
<evidence type="ECO:0000305" key="2"/>
<name>MLTF_ECOK1</name>
<dbReference type="EC" id="4.2.2.n1" evidence="1"/>
<dbReference type="EMBL" id="CP000468">
    <property type="protein sequence ID" value="ABJ01979.1"/>
    <property type="status" value="ALT_INIT"/>
    <property type="molecule type" value="Genomic_DNA"/>
</dbReference>
<dbReference type="RefSeq" id="WP_000734193.1">
    <property type="nucleotide sequence ID" value="NZ_CADILS010000012.1"/>
</dbReference>
<dbReference type="SMR" id="A1AE89"/>
<dbReference type="CAZy" id="GH23">
    <property type="family name" value="Glycoside Hydrolase Family 23"/>
</dbReference>
<dbReference type="KEGG" id="ecv:APECO1_3973"/>
<dbReference type="HOGENOM" id="CLU_027494_0_1_6"/>
<dbReference type="Proteomes" id="UP000008216">
    <property type="component" value="Chromosome"/>
</dbReference>
<dbReference type="GO" id="GO:0009279">
    <property type="term" value="C:cell outer membrane"/>
    <property type="evidence" value="ECO:0007669"/>
    <property type="project" value="UniProtKB-SubCell"/>
</dbReference>
<dbReference type="GO" id="GO:0008933">
    <property type="term" value="F:peptidoglycan lytic transglycosylase activity"/>
    <property type="evidence" value="ECO:0007669"/>
    <property type="project" value="UniProtKB-UniRule"/>
</dbReference>
<dbReference type="GO" id="GO:0016998">
    <property type="term" value="P:cell wall macromolecule catabolic process"/>
    <property type="evidence" value="ECO:0007669"/>
    <property type="project" value="UniProtKB-UniRule"/>
</dbReference>
<dbReference type="GO" id="GO:0071555">
    <property type="term" value="P:cell wall organization"/>
    <property type="evidence" value="ECO:0007669"/>
    <property type="project" value="UniProtKB-KW"/>
</dbReference>
<dbReference type="GO" id="GO:0009253">
    <property type="term" value="P:peptidoglycan catabolic process"/>
    <property type="evidence" value="ECO:0007669"/>
    <property type="project" value="TreeGrafter"/>
</dbReference>
<dbReference type="CDD" id="cd13403">
    <property type="entry name" value="MLTF-like"/>
    <property type="match status" value="1"/>
</dbReference>
<dbReference type="CDD" id="cd01009">
    <property type="entry name" value="PBP2_YfhD_N"/>
    <property type="match status" value="1"/>
</dbReference>
<dbReference type="FunFam" id="1.10.530.10:FF:000003">
    <property type="entry name" value="Membrane-bound lytic murein transglycosylase F"/>
    <property type="match status" value="1"/>
</dbReference>
<dbReference type="FunFam" id="3.40.190.10:FF:000051">
    <property type="entry name" value="Membrane-bound lytic murein transglycosylase F"/>
    <property type="match status" value="1"/>
</dbReference>
<dbReference type="Gene3D" id="1.10.530.10">
    <property type="match status" value="1"/>
</dbReference>
<dbReference type="Gene3D" id="3.40.190.10">
    <property type="entry name" value="Periplasmic binding protein-like II"/>
    <property type="match status" value="2"/>
</dbReference>
<dbReference type="HAMAP" id="MF_02016">
    <property type="entry name" value="MltF"/>
    <property type="match status" value="1"/>
</dbReference>
<dbReference type="InterPro" id="IPR023346">
    <property type="entry name" value="Lysozyme-like_dom_sf"/>
</dbReference>
<dbReference type="InterPro" id="IPR023703">
    <property type="entry name" value="MltF"/>
</dbReference>
<dbReference type="InterPro" id="IPR001638">
    <property type="entry name" value="Solute-binding_3/MltF_N"/>
</dbReference>
<dbReference type="InterPro" id="IPR000189">
    <property type="entry name" value="Transglyc_AS"/>
</dbReference>
<dbReference type="InterPro" id="IPR008258">
    <property type="entry name" value="Transglycosylase_SLT_dom_1"/>
</dbReference>
<dbReference type="NCBIfam" id="NF008112">
    <property type="entry name" value="PRK10859.1"/>
    <property type="match status" value="1"/>
</dbReference>
<dbReference type="PANTHER" id="PTHR35936">
    <property type="entry name" value="MEMBRANE-BOUND LYTIC MUREIN TRANSGLYCOSYLASE F"/>
    <property type="match status" value="1"/>
</dbReference>
<dbReference type="PANTHER" id="PTHR35936:SF32">
    <property type="entry name" value="MEMBRANE-BOUND LYTIC MUREIN TRANSGLYCOSYLASE F"/>
    <property type="match status" value="1"/>
</dbReference>
<dbReference type="Pfam" id="PF00497">
    <property type="entry name" value="SBP_bac_3"/>
    <property type="match status" value="1"/>
</dbReference>
<dbReference type="Pfam" id="PF01464">
    <property type="entry name" value="SLT"/>
    <property type="match status" value="1"/>
</dbReference>
<dbReference type="SMART" id="SM00062">
    <property type="entry name" value="PBPb"/>
    <property type="match status" value="1"/>
</dbReference>
<dbReference type="SUPFAM" id="SSF53955">
    <property type="entry name" value="Lysozyme-like"/>
    <property type="match status" value="1"/>
</dbReference>
<dbReference type="SUPFAM" id="SSF53850">
    <property type="entry name" value="Periplasmic binding protein-like II"/>
    <property type="match status" value="1"/>
</dbReference>
<dbReference type="PROSITE" id="PS00922">
    <property type="entry name" value="TRANSGLYCOSYLASE"/>
    <property type="match status" value="1"/>
</dbReference>